<protein>
    <recommendedName>
        <fullName>Adenylosuccinate lyase</fullName>
        <shortName>ASL</shortName>
        <ecNumber evidence="2">4.3.2.2</ecNumber>
    </recommendedName>
    <alternativeName>
        <fullName>Adenylosuccinase</fullName>
        <shortName>ASase</shortName>
    </alternativeName>
</protein>
<dbReference type="EC" id="4.3.2.2" evidence="2"/>
<dbReference type="EMBL" id="AE000666">
    <property type="protein sequence ID" value="AAB86011.1"/>
    <property type="molecule type" value="Genomic_DNA"/>
</dbReference>
<dbReference type="PIR" id="A69072">
    <property type="entry name" value="A69072"/>
</dbReference>
<dbReference type="RefSeq" id="WP_010877146.1">
    <property type="nucleotide sequence ID" value="NC_000916.1"/>
</dbReference>
<dbReference type="SMR" id="O27580"/>
<dbReference type="FunCoup" id="O27580">
    <property type="interactions" value="259"/>
</dbReference>
<dbReference type="STRING" id="187420.MTH_1537"/>
<dbReference type="PaxDb" id="187420-MTH_1537"/>
<dbReference type="EnsemblBacteria" id="AAB86011">
    <property type="protein sequence ID" value="AAB86011"/>
    <property type="gene ID" value="MTH_1537"/>
</dbReference>
<dbReference type="GeneID" id="1471806"/>
<dbReference type="GeneID" id="77402057"/>
<dbReference type="KEGG" id="mth:MTH_1537"/>
<dbReference type="PATRIC" id="fig|187420.15.peg.1500"/>
<dbReference type="HOGENOM" id="CLU_030949_0_1_2"/>
<dbReference type="InParanoid" id="O27580"/>
<dbReference type="UniPathway" id="UPA00074">
    <property type="reaction ID" value="UER00132"/>
</dbReference>
<dbReference type="UniPathway" id="UPA00075">
    <property type="reaction ID" value="UER00336"/>
</dbReference>
<dbReference type="Proteomes" id="UP000005223">
    <property type="component" value="Chromosome"/>
</dbReference>
<dbReference type="GO" id="GO:0005829">
    <property type="term" value="C:cytosol"/>
    <property type="evidence" value="ECO:0007669"/>
    <property type="project" value="TreeGrafter"/>
</dbReference>
<dbReference type="GO" id="GO:0070626">
    <property type="term" value="F:(S)-2-(5-amino-1-(5-phospho-D-ribosyl)imidazole-4-carboxamido) succinate lyase (fumarate-forming) activity"/>
    <property type="evidence" value="ECO:0007669"/>
    <property type="project" value="TreeGrafter"/>
</dbReference>
<dbReference type="GO" id="GO:0004018">
    <property type="term" value="F:N6-(1,2-dicarboxyethyl)AMP AMP-lyase (fumarate-forming) activity"/>
    <property type="evidence" value="ECO:0007669"/>
    <property type="project" value="InterPro"/>
</dbReference>
<dbReference type="GO" id="GO:0044208">
    <property type="term" value="P:'de novo' AMP biosynthetic process"/>
    <property type="evidence" value="ECO:0007669"/>
    <property type="project" value="UniProtKB-UniPathway"/>
</dbReference>
<dbReference type="GO" id="GO:0006189">
    <property type="term" value="P:'de novo' IMP biosynthetic process"/>
    <property type="evidence" value="ECO:0007669"/>
    <property type="project" value="UniProtKB-UniPathway"/>
</dbReference>
<dbReference type="CDD" id="cd01360">
    <property type="entry name" value="Adenylsuccinate_lyase_1"/>
    <property type="match status" value="1"/>
</dbReference>
<dbReference type="FunFam" id="1.10.275.10:FF:000012">
    <property type="entry name" value="Adenylosuccinate lyase"/>
    <property type="match status" value="1"/>
</dbReference>
<dbReference type="FunFam" id="1.10.40.30:FF:000007">
    <property type="entry name" value="Adenylosuccinate lyase"/>
    <property type="match status" value="1"/>
</dbReference>
<dbReference type="FunFam" id="1.20.200.10:FF:000008">
    <property type="entry name" value="Adenylosuccinate lyase"/>
    <property type="match status" value="1"/>
</dbReference>
<dbReference type="Gene3D" id="1.10.40.30">
    <property type="entry name" value="Fumarase/aspartase (C-terminal domain)"/>
    <property type="match status" value="1"/>
</dbReference>
<dbReference type="Gene3D" id="1.20.200.10">
    <property type="entry name" value="Fumarase/aspartase (Central domain)"/>
    <property type="match status" value="1"/>
</dbReference>
<dbReference type="Gene3D" id="1.10.275.10">
    <property type="entry name" value="Fumarase/aspartase (N-terminal domain)"/>
    <property type="match status" value="1"/>
</dbReference>
<dbReference type="InterPro" id="IPR019468">
    <property type="entry name" value="AdenyloSucc_lyase_C"/>
</dbReference>
<dbReference type="InterPro" id="IPR024083">
    <property type="entry name" value="Fumarase/histidase_N"/>
</dbReference>
<dbReference type="InterPro" id="IPR020557">
    <property type="entry name" value="Fumarate_lyase_CS"/>
</dbReference>
<dbReference type="InterPro" id="IPR000362">
    <property type="entry name" value="Fumarate_lyase_fam"/>
</dbReference>
<dbReference type="InterPro" id="IPR022761">
    <property type="entry name" value="Fumarate_lyase_N"/>
</dbReference>
<dbReference type="InterPro" id="IPR008948">
    <property type="entry name" value="L-Aspartase-like"/>
</dbReference>
<dbReference type="InterPro" id="IPR004769">
    <property type="entry name" value="Pur_lyase"/>
</dbReference>
<dbReference type="NCBIfam" id="TIGR00928">
    <property type="entry name" value="purB"/>
    <property type="match status" value="1"/>
</dbReference>
<dbReference type="PANTHER" id="PTHR43172">
    <property type="entry name" value="ADENYLOSUCCINATE LYASE"/>
    <property type="match status" value="1"/>
</dbReference>
<dbReference type="PANTHER" id="PTHR43172:SF1">
    <property type="entry name" value="ADENYLOSUCCINATE LYASE"/>
    <property type="match status" value="1"/>
</dbReference>
<dbReference type="Pfam" id="PF10397">
    <property type="entry name" value="ADSL_C"/>
    <property type="match status" value="1"/>
</dbReference>
<dbReference type="Pfam" id="PF00206">
    <property type="entry name" value="Lyase_1"/>
    <property type="match status" value="1"/>
</dbReference>
<dbReference type="PRINTS" id="PR00145">
    <property type="entry name" value="ARGSUCLYASE"/>
</dbReference>
<dbReference type="PRINTS" id="PR00149">
    <property type="entry name" value="FUMRATELYASE"/>
</dbReference>
<dbReference type="SMART" id="SM00998">
    <property type="entry name" value="ADSL_C"/>
    <property type="match status" value="1"/>
</dbReference>
<dbReference type="SUPFAM" id="SSF48557">
    <property type="entry name" value="L-aspartase-like"/>
    <property type="match status" value="1"/>
</dbReference>
<dbReference type="PROSITE" id="PS00163">
    <property type="entry name" value="FUMARATE_LYASES"/>
    <property type="match status" value="1"/>
</dbReference>
<accession>O27580</accession>
<comment type="function">
    <text evidence="2">Catalyzes two reactions in de novo purine nucleotide biosynthesis. Catalyzes the breakdown of 5-aminoimidazole- (N-succinylocarboxamide) ribotide (SAICAR or 2-[5-amino-1-(5-phospho-beta-D-ribosyl)imidazole-4-carboxamido]succinate) to 5-aminoimidazole-4-carboxamide ribotide (AICAR or 5-amino-1-(5-phospho-beta-D-ribosyl)imidazole-4-carboxamide) and fumarate, and of adenylosuccinate (ADS or N(6)-(1,2-dicarboxyethyl)-AMP) to adenosine monophosphate (AMP) and fumarate.</text>
</comment>
<comment type="catalytic activity">
    <reaction evidence="2">
        <text>N(6)-(1,2-dicarboxyethyl)-AMP = fumarate + AMP</text>
        <dbReference type="Rhea" id="RHEA:16853"/>
        <dbReference type="ChEBI" id="CHEBI:29806"/>
        <dbReference type="ChEBI" id="CHEBI:57567"/>
        <dbReference type="ChEBI" id="CHEBI:456215"/>
        <dbReference type="EC" id="4.3.2.2"/>
    </reaction>
    <physiologicalReaction direction="left-to-right" evidence="2">
        <dbReference type="Rhea" id="RHEA:16854"/>
    </physiologicalReaction>
</comment>
<comment type="catalytic activity">
    <reaction evidence="2">
        <text>(2S)-2-[5-amino-1-(5-phospho-beta-D-ribosyl)imidazole-4-carboxamido]succinate = 5-amino-1-(5-phospho-beta-D-ribosyl)imidazole-4-carboxamide + fumarate</text>
        <dbReference type="Rhea" id="RHEA:23920"/>
        <dbReference type="ChEBI" id="CHEBI:29806"/>
        <dbReference type="ChEBI" id="CHEBI:58443"/>
        <dbReference type="ChEBI" id="CHEBI:58475"/>
        <dbReference type="EC" id="4.3.2.2"/>
    </reaction>
    <physiologicalReaction direction="left-to-right" evidence="2">
        <dbReference type="Rhea" id="RHEA:23921"/>
    </physiologicalReaction>
</comment>
<comment type="pathway">
    <text>Purine metabolism; AMP biosynthesis via de novo pathway; AMP from IMP: step 2/2.</text>
</comment>
<comment type="pathway">
    <text>Purine metabolism; IMP biosynthesis via de novo pathway; 5-amino-1-(5-phospho-D-ribosyl)imidazole-4-carboxamide from 5-amino-1-(5-phospho-D-ribosyl)imidazole-4-carboxylate: step 2/2.</text>
</comment>
<comment type="subunit">
    <text evidence="1">Homotetramer. Residues from neighboring subunits contribute catalytic and substrate-binding residues to each active site (By similarity).</text>
</comment>
<comment type="similarity">
    <text evidence="3">Belongs to the lyase 1 family. Adenylosuccinate lyase subfamily.</text>
</comment>
<keyword id="KW-0456">Lyase</keyword>
<keyword id="KW-0658">Purine biosynthesis</keyword>
<keyword id="KW-1185">Reference proteome</keyword>
<gene>
    <name type="primary">purB</name>
    <name type="ordered locus">MTH_1537</name>
</gene>
<proteinExistence type="inferred from homology"/>
<evidence type="ECO:0000250" key="1"/>
<evidence type="ECO:0000250" key="2">
    <source>
        <dbReference type="UniProtKB" id="P0AB89"/>
    </source>
</evidence>
<evidence type="ECO:0000305" key="3"/>
<sequence>MAIHPVEFRYGTPEMRVIWEAENKLQKMLDVEAALAQAEGELGIIPAEAASEIVRKASTEFVTLERVNEIERDTKHDIASLVKALAEQCEGDAGEYVHFGATSNDIVDTSNSLLLRDSISVLRDKLTRVLEVLLALADENRDRVCIGRTHGQHALPTTYGMKFAIWADEIHRQLERLDACSERLCVGMMTGAVGTTAALGEEGLEVHERVSEILGLRPVLISNQVVQRDNHAEFIMVLANIATTLDKIALEIRNLQRTEIMEVGEKFDPEKQVGSSTMPHKMNPITAERICGIARVIRSYVVAALENNPLWHERDLTNSSSERIILPEACILTDYILKLTLDVLCNLVFYPENIKRNLEFTGGLIMAERLMAELTRRGMGRQTAYAAVRQCAIEASRTGRSLRDVVLERSEIMDYLTVEDLEEIMNPETYIGSARRMVERVLEESQKWL</sequence>
<feature type="chain" id="PRO_0000137889" description="Adenylosuccinate lyase">
    <location>
        <begin position="1"/>
        <end position="449"/>
    </location>
</feature>
<feature type="active site" description="Proton donor/acceptor" evidence="2">
    <location>
        <position position="150"/>
    </location>
</feature>
<feature type="active site" description="Proton donor/acceptor" evidence="2">
    <location>
        <position position="275"/>
    </location>
</feature>
<feature type="binding site" evidence="2">
    <location>
        <begin position="9"/>
        <end position="10"/>
    </location>
    <ligand>
        <name>N(6)-(1,2-dicarboxyethyl)-AMP</name>
        <dbReference type="ChEBI" id="CHEBI:57567"/>
    </ligand>
</feature>
<feature type="binding site" evidence="2">
    <location>
        <begin position="75"/>
        <end position="77"/>
    </location>
    <ligand>
        <name>N(6)-(1,2-dicarboxyethyl)-AMP</name>
        <dbReference type="ChEBI" id="CHEBI:57567"/>
    </ligand>
</feature>
<feature type="binding site" evidence="2">
    <location>
        <begin position="102"/>
        <end position="103"/>
    </location>
    <ligand>
        <name>N(6)-(1,2-dicarboxyethyl)-AMP</name>
        <dbReference type="ChEBI" id="CHEBI:57567"/>
    </ligand>
</feature>
<feature type="binding site" evidence="2">
    <location>
        <position position="224"/>
    </location>
    <ligand>
        <name>N(6)-(1,2-dicarboxyethyl)-AMP</name>
        <dbReference type="ChEBI" id="CHEBI:57567"/>
    </ligand>
</feature>
<feature type="binding site" evidence="2">
    <location>
        <position position="276"/>
    </location>
    <ligand>
        <name>N(6)-(1,2-dicarboxyethyl)-AMP</name>
        <dbReference type="ChEBI" id="CHEBI:57567"/>
    </ligand>
</feature>
<feature type="binding site" evidence="2">
    <location>
        <begin position="281"/>
        <end position="283"/>
    </location>
    <ligand>
        <name>N(6)-(1,2-dicarboxyethyl)-AMP</name>
        <dbReference type="ChEBI" id="CHEBI:57567"/>
    </ligand>
</feature>
<feature type="binding site" evidence="2">
    <location>
        <begin position="320"/>
        <end position="324"/>
    </location>
    <ligand>
        <name>N(6)-(1,2-dicarboxyethyl)-AMP</name>
        <dbReference type="ChEBI" id="CHEBI:57567"/>
    </ligand>
</feature>
<name>PUR8_METTH</name>
<organism>
    <name type="scientific">Methanothermobacter thermautotrophicus (strain ATCC 29096 / DSM 1053 / JCM 10044 / NBRC 100330 / Delta H)</name>
    <name type="common">Methanobacterium thermoautotrophicum</name>
    <dbReference type="NCBI Taxonomy" id="187420"/>
    <lineage>
        <taxon>Archaea</taxon>
        <taxon>Methanobacteriati</taxon>
        <taxon>Methanobacteriota</taxon>
        <taxon>Methanomada group</taxon>
        <taxon>Methanobacteria</taxon>
        <taxon>Methanobacteriales</taxon>
        <taxon>Methanobacteriaceae</taxon>
        <taxon>Methanothermobacter</taxon>
    </lineage>
</organism>
<reference key="1">
    <citation type="journal article" date="1997" name="J. Bacteriol.">
        <title>Complete genome sequence of Methanobacterium thermoautotrophicum deltaH: functional analysis and comparative genomics.</title>
        <authorList>
            <person name="Smith D.R."/>
            <person name="Doucette-Stamm L.A."/>
            <person name="Deloughery C."/>
            <person name="Lee H.-M."/>
            <person name="Dubois J."/>
            <person name="Aldredge T."/>
            <person name="Bashirzadeh R."/>
            <person name="Blakely D."/>
            <person name="Cook R."/>
            <person name="Gilbert K."/>
            <person name="Harrison D."/>
            <person name="Hoang L."/>
            <person name="Keagle P."/>
            <person name="Lumm W."/>
            <person name="Pothier B."/>
            <person name="Qiu D."/>
            <person name="Spadafora R."/>
            <person name="Vicare R."/>
            <person name="Wang Y."/>
            <person name="Wierzbowski J."/>
            <person name="Gibson R."/>
            <person name="Jiwani N."/>
            <person name="Caruso A."/>
            <person name="Bush D."/>
            <person name="Safer H."/>
            <person name="Patwell D."/>
            <person name="Prabhakar S."/>
            <person name="McDougall S."/>
            <person name="Shimer G."/>
            <person name="Goyal A."/>
            <person name="Pietrovski S."/>
            <person name="Church G.M."/>
            <person name="Daniels C.J."/>
            <person name="Mao J.-I."/>
            <person name="Rice P."/>
            <person name="Noelling J."/>
            <person name="Reeve J.N."/>
        </authorList>
    </citation>
    <scope>NUCLEOTIDE SEQUENCE [LARGE SCALE GENOMIC DNA]</scope>
    <source>
        <strain>ATCC 29096 / DSM 1053 / JCM 10044 / NBRC 100330 / Delta H</strain>
    </source>
</reference>